<dbReference type="EMBL" id="X07414">
    <property type="protein sequence ID" value="CAA30310.1"/>
    <property type="molecule type" value="mRNA"/>
</dbReference>
<dbReference type="EMBL" id="X07413">
    <property type="status" value="NOT_ANNOTATED_CDS"/>
    <property type="molecule type" value="Genomic_DNA"/>
</dbReference>
<dbReference type="EMBL" id="AK088271">
    <property type="protein sequence ID" value="BAC40249.1"/>
    <property type="molecule type" value="mRNA"/>
</dbReference>
<dbReference type="EMBL" id="AK136733">
    <property type="protein sequence ID" value="BAE23112.1"/>
    <property type="molecule type" value="mRNA"/>
</dbReference>
<dbReference type="EMBL" id="AC148988">
    <property type="status" value="NOT_ANNOTATED_CDS"/>
    <property type="molecule type" value="Genomic_DNA"/>
</dbReference>
<dbReference type="EMBL" id="CH466639">
    <property type="protein sequence ID" value="EDL23137.1"/>
    <property type="molecule type" value="Genomic_DNA"/>
</dbReference>
<dbReference type="EMBL" id="BC011224">
    <property type="protein sequence ID" value="AAH11224.1"/>
    <property type="molecule type" value="mRNA"/>
</dbReference>
<dbReference type="CCDS" id="CCDS20898.1"/>
<dbReference type="PIR" id="S01202">
    <property type="entry name" value="S01202"/>
</dbReference>
<dbReference type="RefSeq" id="NP_001120796.1">
    <property type="nucleotide sequence ID" value="NM_001127324.1"/>
</dbReference>
<dbReference type="RefSeq" id="NP_031974.2">
    <property type="nucleotide sequence ID" value="NM_007948.3"/>
</dbReference>
<dbReference type="SMR" id="P07903"/>
<dbReference type="BioGRID" id="199499">
    <property type="interactions" value="4"/>
</dbReference>
<dbReference type="ComplexPortal" id="CPX-491">
    <property type="entry name" value="Ercc1-Xpf endonuclease complex"/>
</dbReference>
<dbReference type="FunCoup" id="P07903">
    <property type="interactions" value="2134"/>
</dbReference>
<dbReference type="STRING" id="10090.ENSMUSP00000003645"/>
<dbReference type="iPTMnet" id="P07903"/>
<dbReference type="PhosphoSitePlus" id="P07903"/>
<dbReference type="PaxDb" id="10090-ENSMUSP00000003645"/>
<dbReference type="PeptideAtlas" id="P07903"/>
<dbReference type="ProteomicsDB" id="275468"/>
<dbReference type="Pumba" id="P07903"/>
<dbReference type="Antibodypedia" id="3826">
    <property type="antibodies" value="1394 antibodies from 43 providers"/>
</dbReference>
<dbReference type="Ensembl" id="ENSMUST00000003645.9">
    <property type="protein sequence ID" value="ENSMUSP00000003645.3"/>
    <property type="gene ID" value="ENSMUSG00000003549.10"/>
</dbReference>
<dbReference type="GeneID" id="13870"/>
<dbReference type="KEGG" id="mmu:13870"/>
<dbReference type="UCSC" id="uc009flm.2">
    <property type="organism name" value="mouse"/>
</dbReference>
<dbReference type="AGR" id="MGI:95412"/>
<dbReference type="CTD" id="2067"/>
<dbReference type="MGI" id="MGI:95412">
    <property type="gene designation" value="Ercc1"/>
</dbReference>
<dbReference type="VEuPathDB" id="HostDB:ENSMUSG00000003549"/>
<dbReference type="eggNOG" id="KOG2841">
    <property type="taxonomic scope" value="Eukaryota"/>
</dbReference>
<dbReference type="GeneTree" id="ENSGT00390000011275"/>
<dbReference type="HOGENOM" id="CLU_041616_3_1_1"/>
<dbReference type="InParanoid" id="P07903"/>
<dbReference type="OMA" id="PHCVLVH"/>
<dbReference type="OrthoDB" id="10262814at2759"/>
<dbReference type="PhylomeDB" id="P07903"/>
<dbReference type="TreeFam" id="TF101231"/>
<dbReference type="Reactome" id="R-MMU-5685938">
    <property type="pathway name" value="HDR through Single Strand Annealing (SSA)"/>
</dbReference>
<dbReference type="Reactome" id="R-MMU-5696395">
    <property type="pathway name" value="Formation of Incision Complex in GG-NER"/>
</dbReference>
<dbReference type="Reactome" id="R-MMU-5696400">
    <property type="pathway name" value="Dual Incision in GG-NER"/>
</dbReference>
<dbReference type="Reactome" id="R-MMU-6782135">
    <property type="pathway name" value="Dual incision in TC-NER"/>
</dbReference>
<dbReference type="Reactome" id="R-MMU-6783310">
    <property type="pathway name" value="Fanconi Anemia Pathway"/>
</dbReference>
<dbReference type="BioGRID-ORCS" id="13870">
    <property type="hits" value="7 hits in 116 CRISPR screens"/>
</dbReference>
<dbReference type="ChiTaRS" id="Ercc1">
    <property type="organism name" value="mouse"/>
</dbReference>
<dbReference type="PRO" id="PR:P07903"/>
<dbReference type="Proteomes" id="UP000000589">
    <property type="component" value="Chromosome 7"/>
</dbReference>
<dbReference type="RNAct" id="P07903">
    <property type="molecule type" value="protein"/>
</dbReference>
<dbReference type="Bgee" id="ENSMUSG00000003549">
    <property type="expression patterns" value="Expressed in internal carotid artery and 244 other cell types or tissues"/>
</dbReference>
<dbReference type="ExpressionAtlas" id="P07903">
    <property type="expression patterns" value="baseline and differential"/>
</dbReference>
<dbReference type="GO" id="GO:0000781">
    <property type="term" value="C:chromosome, telomeric region"/>
    <property type="evidence" value="ECO:0007669"/>
    <property type="project" value="Ensembl"/>
</dbReference>
<dbReference type="GO" id="GO:0070522">
    <property type="term" value="C:ERCC4-ERCC1 complex"/>
    <property type="evidence" value="ECO:0000266"/>
    <property type="project" value="ComplexPortal"/>
</dbReference>
<dbReference type="GO" id="GO:0005654">
    <property type="term" value="C:nucleoplasm"/>
    <property type="evidence" value="ECO:0007669"/>
    <property type="project" value="Ensembl"/>
</dbReference>
<dbReference type="GO" id="GO:0000109">
    <property type="term" value="C:nucleotide-excision repair complex"/>
    <property type="evidence" value="ECO:0000250"/>
    <property type="project" value="UniProtKB"/>
</dbReference>
<dbReference type="GO" id="GO:0000110">
    <property type="term" value="C:nucleotide-excision repair factor 1 complex"/>
    <property type="evidence" value="ECO:0007669"/>
    <property type="project" value="Ensembl"/>
</dbReference>
<dbReference type="GO" id="GO:0005634">
    <property type="term" value="C:nucleus"/>
    <property type="evidence" value="ECO:0000353"/>
    <property type="project" value="MGI"/>
</dbReference>
<dbReference type="GO" id="GO:1990599">
    <property type="term" value="F:3' overhang single-stranded DNA endodeoxyribonuclease activity"/>
    <property type="evidence" value="ECO:0007669"/>
    <property type="project" value="Ensembl"/>
</dbReference>
<dbReference type="GO" id="GO:0003684">
    <property type="term" value="F:damaged DNA binding"/>
    <property type="evidence" value="ECO:0007669"/>
    <property type="project" value="Ensembl"/>
</dbReference>
<dbReference type="GO" id="GO:1990841">
    <property type="term" value="F:promoter-specific chromatin binding"/>
    <property type="evidence" value="ECO:0000314"/>
    <property type="project" value="MGI"/>
</dbReference>
<dbReference type="GO" id="GO:0003697">
    <property type="term" value="F:single-stranded DNA binding"/>
    <property type="evidence" value="ECO:0007669"/>
    <property type="project" value="Ensembl"/>
</dbReference>
<dbReference type="GO" id="GO:0001094">
    <property type="term" value="F:TFIID-class transcription factor complex binding"/>
    <property type="evidence" value="ECO:0000314"/>
    <property type="project" value="MGI"/>
</dbReference>
<dbReference type="GO" id="GO:0048468">
    <property type="term" value="P:cell development"/>
    <property type="evidence" value="ECO:0000315"/>
    <property type="project" value="MGI"/>
</dbReference>
<dbReference type="GO" id="GO:0008283">
    <property type="term" value="P:cell population proliferation"/>
    <property type="evidence" value="ECO:0000315"/>
    <property type="project" value="MGI"/>
</dbReference>
<dbReference type="GO" id="GO:0051276">
    <property type="term" value="P:chromosome organization"/>
    <property type="evidence" value="ECO:0000315"/>
    <property type="project" value="MGI"/>
</dbReference>
<dbReference type="GO" id="GO:0008340">
    <property type="term" value="P:determination of adult lifespan"/>
    <property type="evidence" value="ECO:0000315"/>
    <property type="project" value="MGI"/>
</dbReference>
<dbReference type="GO" id="GO:0006974">
    <property type="term" value="P:DNA damage response"/>
    <property type="evidence" value="ECO:0000315"/>
    <property type="project" value="MGI"/>
</dbReference>
<dbReference type="GO" id="GO:0006310">
    <property type="term" value="P:DNA recombination"/>
    <property type="evidence" value="ECO:0000315"/>
    <property type="project" value="MGI"/>
</dbReference>
<dbReference type="GO" id="GO:0006281">
    <property type="term" value="P:DNA repair"/>
    <property type="evidence" value="ECO:0000315"/>
    <property type="project" value="MGI"/>
</dbReference>
<dbReference type="GO" id="GO:0006302">
    <property type="term" value="P:double-strand break repair"/>
    <property type="evidence" value="ECO:0000315"/>
    <property type="project" value="MGI"/>
</dbReference>
<dbReference type="GO" id="GO:0006303">
    <property type="term" value="P:double-strand break repair via nonhomologous end joining"/>
    <property type="evidence" value="ECO:0007669"/>
    <property type="project" value="Ensembl"/>
</dbReference>
<dbReference type="GO" id="GO:0007281">
    <property type="term" value="P:germ cell development"/>
    <property type="evidence" value="ECO:0000315"/>
    <property type="project" value="MGI"/>
</dbReference>
<dbReference type="GO" id="GO:0048009">
    <property type="term" value="P:insulin-like growth factor receptor signaling pathway"/>
    <property type="evidence" value="ECO:0000315"/>
    <property type="project" value="MGI"/>
</dbReference>
<dbReference type="GO" id="GO:0036297">
    <property type="term" value="P:interstrand cross-link repair"/>
    <property type="evidence" value="ECO:0000315"/>
    <property type="project" value="MGI"/>
</dbReference>
<dbReference type="GO" id="GO:0045190">
    <property type="term" value="P:isotype switching"/>
    <property type="evidence" value="ECO:0000315"/>
    <property type="project" value="MGI"/>
</dbReference>
<dbReference type="GO" id="GO:0008584">
    <property type="term" value="P:male gonad development"/>
    <property type="evidence" value="ECO:0000315"/>
    <property type="project" value="MGI"/>
</dbReference>
<dbReference type="GO" id="GO:0035264">
    <property type="term" value="P:multicellular organism growth"/>
    <property type="evidence" value="ECO:0000315"/>
    <property type="project" value="MGI"/>
</dbReference>
<dbReference type="GO" id="GO:1905765">
    <property type="term" value="P:negative regulation of protection from non-homologous end joining at telomere"/>
    <property type="evidence" value="ECO:0007669"/>
    <property type="project" value="Ensembl"/>
</dbReference>
<dbReference type="GO" id="GO:0006289">
    <property type="term" value="P:nucleotide-excision repair"/>
    <property type="evidence" value="ECO:0000315"/>
    <property type="project" value="MGI"/>
</dbReference>
<dbReference type="GO" id="GO:0048477">
    <property type="term" value="P:oogenesis"/>
    <property type="evidence" value="ECO:0000315"/>
    <property type="project" value="MGI"/>
</dbReference>
<dbReference type="GO" id="GO:1904431">
    <property type="term" value="P:positive regulation of t-circle formation"/>
    <property type="evidence" value="ECO:0000315"/>
    <property type="project" value="BHF-UCL"/>
</dbReference>
<dbReference type="GO" id="GO:0060261">
    <property type="term" value="P:positive regulation of transcription initiation by RNA polymerase II"/>
    <property type="evidence" value="ECO:0000315"/>
    <property type="project" value="MGI"/>
</dbReference>
<dbReference type="GO" id="GO:0035166">
    <property type="term" value="P:post-embryonic hemopoiesis"/>
    <property type="evidence" value="ECO:0000315"/>
    <property type="project" value="MGI"/>
</dbReference>
<dbReference type="GO" id="GO:0000720">
    <property type="term" value="P:pyrimidine dimer repair by nucleotide-excision repair"/>
    <property type="evidence" value="ECO:0000315"/>
    <property type="project" value="MGI"/>
</dbReference>
<dbReference type="GO" id="GO:0090399">
    <property type="term" value="P:replicative senescence"/>
    <property type="evidence" value="ECO:0000315"/>
    <property type="project" value="MGI"/>
</dbReference>
<dbReference type="GO" id="GO:0006979">
    <property type="term" value="P:response to oxidative stress"/>
    <property type="evidence" value="ECO:0007669"/>
    <property type="project" value="Ensembl"/>
</dbReference>
<dbReference type="GO" id="GO:0010165">
    <property type="term" value="P:response to X-ray"/>
    <property type="evidence" value="ECO:0000315"/>
    <property type="project" value="MGI"/>
</dbReference>
<dbReference type="GO" id="GO:0007283">
    <property type="term" value="P:spermatogenesis"/>
    <property type="evidence" value="ECO:0000315"/>
    <property type="project" value="MGI"/>
</dbReference>
<dbReference type="GO" id="GO:0006949">
    <property type="term" value="P:syncytium formation"/>
    <property type="evidence" value="ECO:0000315"/>
    <property type="project" value="MGI"/>
</dbReference>
<dbReference type="GO" id="GO:0090656">
    <property type="term" value="P:t-circle formation"/>
    <property type="evidence" value="ECO:0000315"/>
    <property type="project" value="BHF-UCL"/>
</dbReference>
<dbReference type="GO" id="GO:0061819">
    <property type="term" value="P:telomeric DNA-containing double minutes formation"/>
    <property type="evidence" value="ECO:0007669"/>
    <property type="project" value="Ensembl"/>
</dbReference>
<dbReference type="GO" id="GO:0009650">
    <property type="term" value="P:UV protection"/>
    <property type="evidence" value="ECO:0000315"/>
    <property type="project" value="MGI"/>
</dbReference>
<dbReference type="CDD" id="cd22325">
    <property type="entry name" value="ERCC1_C-like"/>
    <property type="match status" value="1"/>
</dbReference>
<dbReference type="FunFam" id="1.10.150.20:FF:000017">
    <property type="entry name" value="DNA excision repair protein ERCC-1"/>
    <property type="match status" value="1"/>
</dbReference>
<dbReference type="FunFam" id="3.40.50.10130:FF:000001">
    <property type="entry name" value="DNA excision repair protein ERCC-1"/>
    <property type="match status" value="1"/>
</dbReference>
<dbReference type="Gene3D" id="3.40.50.10130">
    <property type="match status" value="1"/>
</dbReference>
<dbReference type="Gene3D" id="1.10.150.20">
    <property type="entry name" value="5' to 3' exonuclease, C-terminal subdomain"/>
    <property type="match status" value="1"/>
</dbReference>
<dbReference type="InterPro" id="IPR047260">
    <property type="entry name" value="ERCC1-like_central_dom"/>
</dbReference>
<dbReference type="InterPro" id="IPR004579">
    <property type="entry name" value="ERCC1/RAD10/SWI10"/>
</dbReference>
<dbReference type="InterPro" id="IPR011335">
    <property type="entry name" value="Restrct_endonuc-II-like"/>
</dbReference>
<dbReference type="InterPro" id="IPR010994">
    <property type="entry name" value="RuvA_2-like"/>
</dbReference>
<dbReference type="NCBIfam" id="TIGR00597">
    <property type="entry name" value="rad10"/>
    <property type="match status" value="1"/>
</dbReference>
<dbReference type="PANTHER" id="PTHR12749:SF0">
    <property type="entry name" value="DNA EXCISION REPAIR PROTEIN ERCC-1"/>
    <property type="match status" value="1"/>
</dbReference>
<dbReference type="PANTHER" id="PTHR12749">
    <property type="entry name" value="EXCISION REPAIR CROSS-COMPLEMENTING 1 ERCC1"/>
    <property type="match status" value="1"/>
</dbReference>
<dbReference type="Pfam" id="PF14520">
    <property type="entry name" value="HHH_5"/>
    <property type="match status" value="1"/>
</dbReference>
<dbReference type="Pfam" id="PF03834">
    <property type="entry name" value="Rad10"/>
    <property type="match status" value="1"/>
</dbReference>
<dbReference type="SUPFAM" id="SSF52980">
    <property type="entry name" value="Restriction endonuclease-like"/>
    <property type="match status" value="1"/>
</dbReference>
<dbReference type="SUPFAM" id="SSF47781">
    <property type="entry name" value="RuvA domain 2-like"/>
    <property type="match status" value="1"/>
</dbReference>
<name>ERCC1_MOUSE</name>
<feature type="chain" id="PRO_0000087007" description="DNA excision repair protein ERCC-1">
    <location>
        <begin position="1"/>
        <end position="298"/>
    </location>
</feature>
<feature type="DNA-binding region" evidence="2">
    <location>
        <begin position="134"/>
        <end position="156"/>
    </location>
</feature>
<feature type="region of interest" description="Disordered" evidence="3">
    <location>
        <begin position="1"/>
        <end position="24"/>
    </location>
</feature>
<feature type="region of interest" description="Disordered" evidence="3">
    <location>
        <begin position="66"/>
        <end position="99"/>
    </location>
</feature>
<feature type="region of interest" description="HhH2, dimerization with ERRC4/XPF" evidence="1">
    <location>
        <begin position="220"/>
        <end position="298"/>
    </location>
</feature>
<feature type="short sequence motif" description="Nuclear localization signal" evidence="2">
    <location>
        <begin position="17"/>
        <end position="23"/>
    </location>
</feature>
<feature type="compositionally biased region" description="Basic and acidic residues" evidence="3">
    <location>
        <begin position="1"/>
        <end position="10"/>
    </location>
</feature>
<feature type="compositionally biased region" description="Polar residues" evidence="3">
    <location>
        <begin position="87"/>
        <end position="99"/>
    </location>
</feature>
<feature type="modified residue" description="N-acetylmethionine" evidence="1">
    <location>
        <position position="1"/>
    </location>
</feature>
<feature type="cross-link" description="Glycyl lysine isopeptide (Lys-Gly) (interchain with G-Cter in SUMO2)" evidence="1">
    <location>
        <position position="21"/>
    </location>
</feature>
<feature type="cross-link" description="Glycyl lysine isopeptide (Lys-Gly) (interchain with G-Cter in SUMO2)" evidence="1">
    <location>
        <position position="37"/>
    </location>
</feature>
<feature type="cross-link" description="Glycyl lysine isopeptide (Lys-Gly) (interchain with G-Cter in SUMO2)" evidence="1">
    <location>
        <position position="243"/>
    </location>
</feature>
<feature type="sequence conflict" description="In Ref. 1; CAA30310." evidence="4" ref="1">
    <original>V</original>
    <variation>M</variation>
    <location>
        <position position="55"/>
    </location>
</feature>
<feature type="sequence conflict" description="In Ref. 1; CAA30310." evidence="4" ref="1">
    <original>K</original>
    <variation>R</variation>
    <location>
        <position position="213"/>
    </location>
</feature>
<keyword id="KW-0007">Acetylation</keyword>
<keyword id="KW-0227">DNA damage</keyword>
<keyword id="KW-0234">DNA repair</keyword>
<keyword id="KW-0238">DNA-binding</keyword>
<keyword id="KW-1017">Isopeptide bond</keyword>
<keyword id="KW-0539">Nucleus</keyword>
<keyword id="KW-1185">Reference proteome</keyword>
<keyword id="KW-0832">Ubl conjugation</keyword>
<accession>P07903</accession>
<accession>Q91VP3</accession>
<sequence>MDPGKDEESRPQPSGPPTRRKFVIPLEEEEVPCAGVKPLFRSSRNPTIPATSAHVAPQTYAEYAITQPPGGAGATVPTGSEPAAGENPSQTLKTGAKSNSIIVSPRQRGNPVLKFVRNVPWEFGEVIPDYVLGQSTCALFLSLRYHNLHPDYIHERLQSLGKNFALRVLLVQVDVKDPQQALKELAKMCILADCTLVLAWSAEEAGRYLETYKAYEQKPADLLMEKLEQNFLSRATECLTTVKSVNKTDSQTLLATFGSLEQLFTASREDLALCPGLGPQKARRLFEVLHEPFLKVPR</sequence>
<organism>
    <name type="scientific">Mus musculus</name>
    <name type="common">Mouse</name>
    <dbReference type="NCBI Taxonomy" id="10090"/>
    <lineage>
        <taxon>Eukaryota</taxon>
        <taxon>Metazoa</taxon>
        <taxon>Chordata</taxon>
        <taxon>Craniata</taxon>
        <taxon>Vertebrata</taxon>
        <taxon>Euteleostomi</taxon>
        <taxon>Mammalia</taxon>
        <taxon>Eutheria</taxon>
        <taxon>Euarchontoglires</taxon>
        <taxon>Glires</taxon>
        <taxon>Rodentia</taxon>
        <taxon>Myomorpha</taxon>
        <taxon>Muroidea</taxon>
        <taxon>Muridae</taxon>
        <taxon>Murinae</taxon>
        <taxon>Mus</taxon>
        <taxon>Mus</taxon>
    </lineage>
</organism>
<protein>
    <recommendedName>
        <fullName>DNA excision repair protein ERCC-1</fullName>
    </recommendedName>
</protein>
<comment type="function">
    <text evidence="1">Non-catalytic component of a structure-specific DNA repair endonuclease responsible for the 5'-incision during DNA repair. Responsible, in conjunction with SLX4, for the first step in the repair of interstrand cross-links (ICL). Participates in the processing of anaphase bridge-generating DNA structures, which consist in incompletely processed DNA lesions arising during S or G2 phase, and can result in cytokinesis failure. Also required for homology-directed repair (HDR) of DNA double-strand breaks, in conjunction with SLX4 (By similarity).</text>
</comment>
<comment type="subunit">
    <text evidence="1">Heterodimer composed of ERCC1 and ERRC4/XPF (By similarity). Interacts with USP4 (By similarity).</text>
</comment>
<comment type="subcellular location">
    <subcellularLocation>
        <location evidence="1">Nucleus</location>
    </subcellularLocation>
</comment>
<comment type="PTM">
    <text evidence="1">Ubiquitinated with both 'Lys-48' and 'Lys-63' linkages. Deubiquitinated by USP45.</text>
</comment>
<comment type="similarity">
    <text evidence="4">Belongs to the ERCC1/RAD10/SWI10 family.</text>
</comment>
<reference key="1">
    <citation type="journal article" date="1988" name="Nucleic Acids Res.">
        <title>Evolution and mutagenesis of the mammalian excision repair gene ERCC-1.</title>
        <authorList>
            <person name="van Duin M."/>
            <person name="van den Tol J."/>
            <person name="Warmerdam P."/>
            <person name="Odijk H."/>
            <person name="Meijer D."/>
            <person name="Westerveld A."/>
            <person name="Hoeijmakers J.H.J."/>
        </authorList>
    </citation>
    <scope>NUCLEOTIDE SEQUENCE [GENOMIC DNA / MRNA]</scope>
</reference>
<reference key="2">
    <citation type="journal article" date="2005" name="Science">
        <title>The transcriptional landscape of the mammalian genome.</title>
        <authorList>
            <person name="Carninci P."/>
            <person name="Kasukawa T."/>
            <person name="Katayama S."/>
            <person name="Gough J."/>
            <person name="Frith M.C."/>
            <person name="Maeda N."/>
            <person name="Oyama R."/>
            <person name="Ravasi T."/>
            <person name="Lenhard B."/>
            <person name="Wells C."/>
            <person name="Kodzius R."/>
            <person name="Shimokawa K."/>
            <person name="Bajic V.B."/>
            <person name="Brenner S.E."/>
            <person name="Batalov S."/>
            <person name="Forrest A.R."/>
            <person name="Zavolan M."/>
            <person name="Davis M.J."/>
            <person name="Wilming L.G."/>
            <person name="Aidinis V."/>
            <person name="Allen J.E."/>
            <person name="Ambesi-Impiombato A."/>
            <person name="Apweiler R."/>
            <person name="Aturaliya R.N."/>
            <person name="Bailey T.L."/>
            <person name="Bansal M."/>
            <person name="Baxter L."/>
            <person name="Beisel K.W."/>
            <person name="Bersano T."/>
            <person name="Bono H."/>
            <person name="Chalk A.M."/>
            <person name="Chiu K.P."/>
            <person name="Choudhary V."/>
            <person name="Christoffels A."/>
            <person name="Clutterbuck D.R."/>
            <person name="Crowe M.L."/>
            <person name="Dalla E."/>
            <person name="Dalrymple B.P."/>
            <person name="de Bono B."/>
            <person name="Della Gatta G."/>
            <person name="di Bernardo D."/>
            <person name="Down T."/>
            <person name="Engstrom P."/>
            <person name="Fagiolini M."/>
            <person name="Faulkner G."/>
            <person name="Fletcher C.F."/>
            <person name="Fukushima T."/>
            <person name="Furuno M."/>
            <person name="Futaki S."/>
            <person name="Gariboldi M."/>
            <person name="Georgii-Hemming P."/>
            <person name="Gingeras T.R."/>
            <person name="Gojobori T."/>
            <person name="Green R.E."/>
            <person name="Gustincich S."/>
            <person name="Harbers M."/>
            <person name="Hayashi Y."/>
            <person name="Hensch T.K."/>
            <person name="Hirokawa N."/>
            <person name="Hill D."/>
            <person name="Huminiecki L."/>
            <person name="Iacono M."/>
            <person name="Ikeo K."/>
            <person name="Iwama A."/>
            <person name="Ishikawa T."/>
            <person name="Jakt M."/>
            <person name="Kanapin A."/>
            <person name="Katoh M."/>
            <person name="Kawasawa Y."/>
            <person name="Kelso J."/>
            <person name="Kitamura H."/>
            <person name="Kitano H."/>
            <person name="Kollias G."/>
            <person name="Krishnan S.P."/>
            <person name="Kruger A."/>
            <person name="Kummerfeld S.K."/>
            <person name="Kurochkin I.V."/>
            <person name="Lareau L.F."/>
            <person name="Lazarevic D."/>
            <person name="Lipovich L."/>
            <person name="Liu J."/>
            <person name="Liuni S."/>
            <person name="McWilliam S."/>
            <person name="Madan Babu M."/>
            <person name="Madera M."/>
            <person name="Marchionni L."/>
            <person name="Matsuda H."/>
            <person name="Matsuzawa S."/>
            <person name="Miki H."/>
            <person name="Mignone F."/>
            <person name="Miyake S."/>
            <person name="Morris K."/>
            <person name="Mottagui-Tabar S."/>
            <person name="Mulder N."/>
            <person name="Nakano N."/>
            <person name="Nakauchi H."/>
            <person name="Ng P."/>
            <person name="Nilsson R."/>
            <person name="Nishiguchi S."/>
            <person name="Nishikawa S."/>
            <person name="Nori F."/>
            <person name="Ohara O."/>
            <person name="Okazaki Y."/>
            <person name="Orlando V."/>
            <person name="Pang K.C."/>
            <person name="Pavan W.J."/>
            <person name="Pavesi G."/>
            <person name="Pesole G."/>
            <person name="Petrovsky N."/>
            <person name="Piazza S."/>
            <person name="Reed J."/>
            <person name="Reid J.F."/>
            <person name="Ring B.Z."/>
            <person name="Ringwald M."/>
            <person name="Rost B."/>
            <person name="Ruan Y."/>
            <person name="Salzberg S.L."/>
            <person name="Sandelin A."/>
            <person name="Schneider C."/>
            <person name="Schoenbach C."/>
            <person name="Sekiguchi K."/>
            <person name="Semple C.A."/>
            <person name="Seno S."/>
            <person name="Sessa L."/>
            <person name="Sheng Y."/>
            <person name="Shibata Y."/>
            <person name="Shimada H."/>
            <person name="Shimada K."/>
            <person name="Silva D."/>
            <person name="Sinclair B."/>
            <person name="Sperling S."/>
            <person name="Stupka E."/>
            <person name="Sugiura K."/>
            <person name="Sultana R."/>
            <person name="Takenaka Y."/>
            <person name="Taki K."/>
            <person name="Tammoja K."/>
            <person name="Tan S.L."/>
            <person name="Tang S."/>
            <person name="Taylor M.S."/>
            <person name="Tegner J."/>
            <person name="Teichmann S.A."/>
            <person name="Ueda H.R."/>
            <person name="van Nimwegen E."/>
            <person name="Verardo R."/>
            <person name="Wei C.L."/>
            <person name="Yagi K."/>
            <person name="Yamanishi H."/>
            <person name="Zabarovsky E."/>
            <person name="Zhu S."/>
            <person name="Zimmer A."/>
            <person name="Hide W."/>
            <person name="Bult C."/>
            <person name="Grimmond S.M."/>
            <person name="Teasdale R.D."/>
            <person name="Liu E.T."/>
            <person name="Brusic V."/>
            <person name="Quackenbush J."/>
            <person name="Wahlestedt C."/>
            <person name="Mattick J.S."/>
            <person name="Hume D.A."/>
            <person name="Kai C."/>
            <person name="Sasaki D."/>
            <person name="Tomaru Y."/>
            <person name="Fukuda S."/>
            <person name="Kanamori-Katayama M."/>
            <person name="Suzuki M."/>
            <person name="Aoki J."/>
            <person name="Arakawa T."/>
            <person name="Iida J."/>
            <person name="Imamura K."/>
            <person name="Itoh M."/>
            <person name="Kato T."/>
            <person name="Kawaji H."/>
            <person name="Kawagashira N."/>
            <person name="Kawashima T."/>
            <person name="Kojima M."/>
            <person name="Kondo S."/>
            <person name="Konno H."/>
            <person name="Nakano K."/>
            <person name="Ninomiya N."/>
            <person name="Nishio T."/>
            <person name="Okada M."/>
            <person name="Plessy C."/>
            <person name="Shibata K."/>
            <person name="Shiraki T."/>
            <person name="Suzuki S."/>
            <person name="Tagami M."/>
            <person name="Waki K."/>
            <person name="Watahiki A."/>
            <person name="Okamura-Oho Y."/>
            <person name="Suzuki H."/>
            <person name="Kawai J."/>
            <person name="Hayashizaki Y."/>
        </authorList>
    </citation>
    <scope>NUCLEOTIDE SEQUENCE [LARGE SCALE MRNA]</scope>
    <source>
        <strain>C57BL/6J</strain>
        <strain>NOD</strain>
        <tissue>Epididymis</tissue>
        <tissue>Thymus</tissue>
    </source>
</reference>
<reference key="3">
    <citation type="journal article" date="2009" name="PLoS Biol.">
        <title>Lineage-specific biology revealed by a finished genome assembly of the mouse.</title>
        <authorList>
            <person name="Church D.M."/>
            <person name="Goodstadt L."/>
            <person name="Hillier L.W."/>
            <person name="Zody M.C."/>
            <person name="Goldstein S."/>
            <person name="She X."/>
            <person name="Bult C.J."/>
            <person name="Agarwala R."/>
            <person name="Cherry J.L."/>
            <person name="DiCuccio M."/>
            <person name="Hlavina W."/>
            <person name="Kapustin Y."/>
            <person name="Meric P."/>
            <person name="Maglott D."/>
            <person name="Birtle Z."/>
            <person name="Marques A.C."/>
            <person name="Graves T."/>
            <person name="Zhou S."/>
            <person name="Teague B."/>
            <person name="Potamousis K."/>
            <person name="Churas C."/>
            <person name="Place M."/>
            <person name="Herschleb J."/>
            <person name="Runnheim R."/>
            <person name="Forrest D."/>
            <person name="Amos-Landgraf J."/>
            <person name="Schwartz D.C."/>
            <person name="Cheng Z."/>
            <person name="Lindblad-Toh K."/>
            <person name="Eichler E.E."/>
            <person name="Ponting C.P."/>
        </authorList>
    </citation>
    <scope>NUCLEOTIDE SEQUENCE [LARGE SCALE GENOMIC DNA]</scope>
    <source>
        <strain>C57BL/6J</strain>
    </source>
</reference>
<reference key="4">
    <citation type="submission" date="2005-07" db="EMBL/GenBank/DDBJ databases">
        <authorList>
            <person name="Mural R.J."/>
            <person name="Adams M.D."/>
            <person name="Myers E.W."/>
            <person name="Smith H.O."/>
            <person name="Venter J.C."/>
        </authorList>
    </citation>
    <scope>NUCLEOTIDE SEQUENCE [LARGE SCALE GENOMIC DNA]</scope>
</reference>
<reference key="5">
    <citation type="journal article" date="2004" name="Genome Res.">
        <title>The status, quality, and expansion of the NIH full-length cDNA project: the Mammalian Gene Collection (MGC).</title>
        <authorList>
            <consortium name="The MGC Project Team"/>
        </authorList>
    </citation>
    <scope>NUCLEOTIDE SEQUENCE [LARGE SCALE MRNA]</scope>
    <source>
        <strain>FVB/N</strain>
        <tissue>Mammary tumor</tissue>
    </source>
</reference>
<evidence type="ECO:0000250" key="1">
    <source>
        <dbReference type="UniProtKB" id="P07992"/>
    </source>
</evidence>
<evidence type="ECO:0000255" key="2"/>
<evidence type="ECO:0000256" key="3">
    <source>
        <dbReference type="SAM" id="MobiDB-lite"/>
    </source>
</evidence>
<evidence type="ECO:0000305" key="4"/>
<gene>
    <name type="primary">Ercc1</name>
    <name type="synonym">Ercc-1</name>
</gene>
<proteinExistence type="evidence at transcript level"/>